<name>ZHD6_ORYSI</name>
<gene>
    <name type="primary">ZHD6</name>
    <name type="ORF">OsI_21123</name>
</gene>
<protein>
    <recommendedName>
        <fullName>Zinc-finger homeodomain protein 6</fullName>
    </recommendedName>
</protein>
<evidence type="ECO:0000250" key="1"/>
<evidence type="ECO:0000255" key="2">
    <source>
        <dbReference type="PROSITE-ProRule" id="PRU00856"/>
    </source>
</evidence>
<evidence type="ECO:0000256" key="3">
    <source>
        <dbReference type="SAM" id="MobiDB-lite"/>
    </source>
</evidence>
<feature type="chain" id="PRO_0000426044" description="Zinc-finger homeodomain protein 6">
    <location>
        <begin position="1"/>
        <end position="257"/>
    </location>
</feature>
<feature type="zinc finger region" description="ZF-HD dimerization-type; degenerate" evidence="2">
    <location>
        <begin position="45"/>
        <end position="93"/>
    </location>
</feature>
<feature type="DNA-binding region" description="Homeobox">
    <location>
        <begin position="174"/>
        <end position="237"/>
    </location>
</feature>
<feature type="region of interest" description="Disordered" evidence="3">
    <location>
        <begin position="1"/>
        <end position="35"/>
    </location>
</feature>
<feature type="region of interest" description="Disordered" evidence="3">
    <location>
        <begin position="106"/>
        <end position="182"/>
    </location>
</feature>
<feature type="region of interest" description="Disordered" evidence="3">
    <location>
        <begin position="228"/>
        <end position="257"/>
    </location>
</feature>
<feature type="compositionally biased region" description="Low complexity" evidence="3">
    <location>
        <begin position="21"/>
        <end position="35"/>
    </location>
</feature>
<feature type="compositionally biased region" description="Pro residues" evidence="3">
    <location>
        <begin position="106"/>
        <end position="125"/>
    </location>
</feature>
<feature type="compositionally biased region" description="Low complexity" evidence="3">
    <location>
        <begin position="141"/>
        <end position="155"/>
    </location>
</feature>
<feature type="compositionally biased region" description="Low complexity" evidence="3">
    <location>
        <begin position="242"/>
        <end position="257"/>
    </location>
</feature>
<feature type="site" description="Required for DNA-binding" evidence="1">
    <location>
        <position position="226"/>
    </location>
</feature>
<sequence>MEFRGHDEPVDEMGVAYGRTPPSSSSSPAASASAGNGAGAAEVRYHECLRNHAAAMGGHVVDGCGEFMPMPGDAADALKCAACGCHRSFHRKDDGQQQQQLRLLIPSPPTPRVPLLMPPPQPQPHPHPHPQHPYLHPPFPYHHTPSGSGGTTTESSSEERGPPSSSAAAAQGRRKRFRTKFTPEQKEQMLAFAERVGWRMQKQDEALVEQFCAQVGVRRQVFKVWMHNNKSSIGSSSGGGSRRQPQEQQSQQQQQQQ</sequence>
<organism>
    <name type="scientific">Oryza sativa subsp. indica</name>
    <name type="common">Rice</name>
    <dbReference type="NCBI Taxonomy" id="39946"/>
    <lineage>
        <taxon>Eukaryota</taxon>
        <taxon>Viridiplantae</taxon>
        <taxon>Streptophyta</taxon>
        <taxon>Embryophyta</taxon>
        <taxon>Tracheophyta</taxon>
        <taxon>Spermatophyta</taxon>
        <taxon>Magnoliopsida</taxon>
        <taxon>Liliopsida</taxon>
        <taxon>Poales</taxon>
        <taxon>Poaceae</taxon>
        <taxon>BOP clade</taxon>
        <taxon>Oryzoideae</taxon>
        <taxon>Oryzeae</taxon>
        <taxon>Oryzinae</taxon>
        <taxon>Oryza</taxon>
        <taxon>Oryza sativa</taxon>
    </lineage>
</organism>
<keyword id="KW-0238">DNA-binding</keyword>
<keyword id="KW-0371">Homeobox</keyword>
<keyword id="KW-0479">Metal-binding</keyword>
<keyword id="KW-0539">Nucleus</keyword>
<keyword id="KW-1185">Reference proteome</keyword>
<keyword id="KW-0804">Transcription</keyword>
<keyword id="KW-0805">Transcription regulation</keyword>
<keyword id="KW-0862">Zinc</keyword>
<keyword id="KW-0863">Zinc-finger</keyword>
<dbReference type="EMBL" id="CM000130">
    <property type="protein sequence ID" value="EEC79749.1"/>
    <property type="molecule type" value="Genomic_DNA"/>
</dbReference>
<dbReference type="SMR" id="B8AX53"/>
<dbReference type="STRING" id="39946.B8AX53"/>
<dbReference type="EnsemblPlants" id="BGIOSGA020427-TA">
    <property type="protein sequence ID" value="BGIOSGA020427-PA"/>
    <property type="gene ID" value="BGIOSGA020427"/>
</dbReference>
<dbReference type="Gramene" id="BGIOSGA020427-TA">
    <property type="protein sequence ID" value="BGIOSGA020427-PA"/>
    <property type="gene ID" value="BGIOSGA020427"/>
</dbReference>
<dbReference type="HOGENOM" id="CLU_039237_3_1_1"/>
<dbReference type="OMA" id="VEQFCAQ"/>
<dbReference type="Proteomes" id="UP000007015">
    <property type="component" value="Chromosome 5"/>
</dbReference>
<dbReference type="GO" id="GO:0005634">
    <property type="term" value="C:nucleus"/>
    <property type="evidence" value="ECO:0007669"/>
    <property type="project" value="UniProtKB-SubCell"/>
</dbReference>
<dbReference type="GO" id="GO:0003700">
    <property type="term" value="F:DNA-binding transcription factor activity"/>
    <property type="evidence" value="ECO:0007669"/>
    <property type="project" value="TreeGrafter"/>
</dbReference>
<dbReference type="GO" id="GO:0000976">
    <property type="term" value="F:transcription cis-regulatory region binding"/>
    <property type="evidence" value="ECO:0007669"/>
    <property type="project" value="TreeGrafter"/>
</dbReference>
<dbReference type="GO" id="GO:0008270">
    <property type="term" value="F:zinc ion binding"/>
    <property type="evidence" value="ECO:0007669"/>
    <property type="project" value="UniProtKB-KW"/>
</dbReference>
<dbReference type="GO" id="GO:0050793">
    <property type="term" value="P:regulation of developmental process"/>
    <property type="evidence" value="ECO:0007669"/>
    <property type="project" value="TreeGrafter"/>
</dbReference>
<dbReference type="FunFam" id="1.10.10.60:FF:000257">
    <property type="entry name" value="Zinc-finger homeodomain protein 2"/>
    <property type="match status" value="1"/>
</dbReference>
<dbReference type="Gene3D" id="1.10.10.60">
    <property type="entry name" value="Homeodomain-like"/>
    <property type="match status" value="1"/>
</dbReference>
<dbReference type="InterPro" id="IPR009057">
    <property type="entry name" value="Homeodomain-like_sf"/>
</dbReference>
<dbReference type="InterPro" id="IPR006455">
    <property type="entry name" value="Homeodomain_ZF_HD"/>
</dbReference>
<dbReference type="InterPro" id="IPR006456">
    <property type="entry name" value="ZF_HD_homeobox_Cys/His_dimer"/>
</dbReference>
<dbReference type="NCBIfam" id="TIGR01565">
    <property type="entry name" value="homeo_ZF_HD"/>
    <property type="match status" value="1"/>
</dbReference>
<dbReference type="NCBIfam" id="TIGR01566">
    <property type="entry name" value="ZF_HD_prot_N"/>
    <property type="match status" value="1"/>
</dbReference>
<dbReference type="PANTHER" id="PTHR31948">
    <property type="entry name" value="ZINC-FINGER HOMEODOMAIN PROTEIN 2"/>
    <property type="match status" value="1"/>
</dbReference>
<dbReference type="PANTHER" id="PTHR31948:SF167">
    <property type="entry name" value="ZINC-FINGER HOMEODOMAIN PROTEIN 6"/>
    <property type="match status" value="1"/>
</dbReference>
<dbReference type="Pfam" id="PF04770">
    <property type="entry name" value="ZF-HD_dimer"/>
    <property type="match status" value="1"/>
</dbReference>
<dbReference type="SUPFAM" id="SSF46689">
    <property type="entry name" value="Homeodomain-like"/>
    <property type="match status" value="1"/>
</dbReference>
<dbReference type="PROSITE" id="PS51523">
    <property type="entry name" value="ZF_HD_DIMER"/>
    <property type="match status" value="1"/>
</dbReference>
<reference key="1">
    <citation type="journal article" date="2005" name="PLoS Biol.">
        <title>The genomes of Oryza sativa: a history of duplications.</title>
        <authorList>
            <person name="Yu J."/>
            <person name="Wang J."/>
            <person name="Lin W."/>
            <person name="Li S."/>
            <person name="Li H."/>
            <person name="Zhou J."/>
            <person name="Ni P."/>
            <person name="Dong W."/>
            <person name="Hu S."/>
            <person name="Zeng C."/>
            <person name="Zhang J."/>
            <person name="Zhang Y."/>
            <person name="Li R."/>
            <person name="Xu Z."/>
            <person name="Li S."/>
            <person name="Li X."/>
            <person name="Zheng H."/>
            <person name="Cong L."/>
            <person name="Lin L."/>
            <person name="Yin J."/>
            <person name="Geng J."/>
            <person name="Li G."/>
            <person name="Shi J."/>
            <person name="Liu J."/>
            <person name="Lv H."/>
            <person name="Li J."/>
            <person name="Wang J."/>
            <person name="Deng Y."/>
            <person name="Ran L."/>
            <person name="Shi X."/>
            <person name="Wang X."/>
            <person name="Wu Q."/>
            <person name="Li C."/>
            <person name="Ren X."/>
            <person name="Wang J."/>
            <person name="Wang X."/>
            <person name="Li D."/>
            <person name="Liu D."/>
            <person name="Zhang X."/>
            <person name="Ji Z."/>
            <person name="Zhao W."/>
            <person name="Sun Y."/>
            <person name="Zhang Z."/>
            <person name="Bao J."/>
            <person name="Han Y."/>
            <person name="Dong L."/>
            <person name="Ji J."/>
            <person name="Chen P."/>
            <person name="Wu S."/>
            <person name="Liu J."/>
            <person name="Xiao Y."/>
            <person name="Bu D."/>
            <person name="Tan J."/>
            <person name="Yang L."/>
            <person name="Ye C."/>
            <person name="Zhang J."/>
            <person name="Xu J."/>
            <person name="Zhou Y."/>
            <person name="Yu Y."/>
            <person name="Zhang B."/>
            <person name="Zhuang S."/>
            <person name="Wei H."/>
            <person name="Liu B."/>
            <person name="Lei M."/>
            <person name="Yu H."/>
            <person name="Li Y."/>
            <person name="Xu H."/>
            <person name="Wei S."/>
            <person name="He X."/>
            <person name="Fang L."/>
            <person name="Zhang Z."/>
            <person name="Zhang Y."/>
            <person name="Huang X."/>
            <person name="Su Z."/>
            <person name="Tong W."/>
            <person name="Li J."/>
            <person name="Tong Z."/>
            <person name="Li S."/>
            <person name="Ye J."/>
            <person name="Wang L."/>
            <person name="Fang L."/>
            <person name="Lei T."/>
            <person name="Chen C.-S."/>
            <person name="Chen H.-C."/>
            <person name="Xu Z."/>
            <person name="Li H."/>
            <person name="Huang H."/>
            <person name="Zhang F."/>
            <person name="Xu H."/>
            <person name="Li N."/>
            <person name="Zhao C."/>
            <person name="Li S."/>
            <person name="Dong L."/>
            <person name="Huang Y."/>
            <person name="Li L."/>
            <person name="Xi Y."/>
            <person name="Qi Q."/>
            <person name="Li W."/>
            <person name="Zhang B."/>
            <person name="Hu W."/>
            <person name="Zhang Y."/>
            <person name="Tian X."/>
            <person name="Jiao Y."/>
            <person name="Liang X."/>
            <person name="Jin J."/>
            <person name="Gao L."/>
            <person name="Zheng W."/>
            <person name="Hao B."/>
            <person name="Liu S.-M."/>
            <person name="Wang W."/>
            <person name="Yuan L."/>
            <person name="Cao M."/>
            <person name="McDermott J."/>
            <person name="Samudrala R."/>
            <person name="Wang J."/>
            <person name="Wong G.K.-S."/>
            <person name="Yang H."/>
        </authorList>
    </citation>
    <scope>NUCLEOTIDE SEQUENCE [LARGE SCALE GENOMIC DNA]</scope>
    <source>
        <strain>cv. 93-11</strain>
    </source>
</reference>
<comment type="function">
    <text evidence="1">Putative transcription factor.</text>
</comment>
<comment type="subunit">
    <text evidence="1">Homo- and heterodimer with other ZFHD proteins.</text>
</comment>
<comment type="subcellular location">
    <subcellularLocation>
        <location evidence="1">Nucleus</location>
    </subcellularLocation>
</comment>
<comment type="domain">
    <text>The homeodomain differs form the typical one by having namely 4 instead of 3 extra amino acids inserted in the loop between helix 1 and helix 2.</text>
</comment>
<accession>B8AX53</accession>
<proteinExistence type="inferred from homology"/>